<feature type="signal peptide" evidence="2">
    <location>
        <begin position="1"/>
        <end position="19"/>
    </location>
</feature>
<feature type="propeptide" id="PRO_0000425165" evidence="1">
    <location>
        <begin position="20"/>
        <end position="34"/>
    </location>
</feature>
<feature type="peptide" id="PRO_0000425166" description="Conotoxin Vc6.8">
    <location>
        <begin position="38"/>
        <end position="74"/>
    </location>
</feature>
<feature type="disulfide bond" evidence="1">
    <location>
        <begin position="49"/>
        <end position="62"/>
    </location>
</feature>
<feature type="disulfide bond" evidence="1">
    <location>
        <begin position="55"/>
        <end position="66"/>
    </location>
</feature>
<feature type="disulfide bond" evidence="1">
    <location>
        <begin position="61"/>
        <end position="70"/>
    </location>
</feature>
<reference key="1">
    <citation type="journal article" date="2011" name="J. Biol. Chem.">
        <title>Embryonic toxin expression in the cone snail Conus victoriae: primed to kill or divergent function?</title>
        <authorList>
            <person name="Safavi-Hemami H."/>
            <person name="Siero W.A."/>
            <person name="Kuang Z."/>
            <person name="Williamson N.A."/>
            <person name="Karas J.A."/>
            <person name="Page L.R."/>
            <person name="Macmillan D."/>
            <person name="Callaghan B."/>
            <person name="Kompella S.N."/>
            <person name="Adams D.J."/>
            <person name="Norton R.S."/>
            <person name="Purcell A.W."/>
        </authorList>
    </citation>
    <scope>NUCLEOTIDE SEQUENCE [MRNA]</scope>
    <scope>DEVELOPMENTAL STAGE</scope>
    <source>
        <tissue>Embryo</tissue>
        <tissue>Venom duct</tissue>
    </source>
</reference>
<proteinExistence type="evidence at transcript level"/>
<keyword id="KW-0165">Cleavage on pair of basic residues</keyword>
<keyword id="KW-1015">Disulfide bond</keyword>
<keyword id="KW-0872">Ion channel impairing toxin</keyword>
<keyword id="KW-0960">Knottin</keyword>
<keyword id="KW-0964">Secreted</keyword>
<keyword id="KW-0732">Signal</keyword>
<keyword id="KW-0800">Toxin</keyword>
<comment type="function">
    <text evidence="1">Inhibits voltage-gated ion channels.</text>
</comment>
<comment type="subcellular location">
    <subcellularLocation>
        <location evidence="1">Secreted</location>
    </subcellularLocation>
</comment>
<comment type="tissue specificity">
    <text>Expressed by the venom duct.</text>
</comment>
<comment type="developmental stage">
    <text evidence="3">Only expressed in adults.</text>
</comment>
<comment type="domain">
    <text evidence="1">The presence of a 'disulfide through disulfide knot' structurally defines this protein as a knottin.</text>
</comment>
<comment type="domain">
    <text>The cysteine framework is VI/VII (C-C-CC-C-C).</text>
</comment>
<comment type="similarity">
    <text evidence="4">Belongs to the conotoxin O2 superfamily.</text>
</comment>
<protein>
    <recommendedName>
        <fullName>Conotoxin Vc6.8</fullName>
    </recommendedName>
</protein>
<evidence type="ECO:0000250" key="1"/>
<evidence type="ECO:0000255" key="2"/>
<evidence type="ECO:0000269" key="3">
    <source>
    </source>
</evidence>
<evidence type="ECO:0000305" key="4"/>
<sequence length="74" mass="8275">MEKLTILLLVAAVLMSTQALMQEQRQKAKINLFSKRRLSAESWWEENGCSLWGPCTVNAECCSGDCDETCIFGS</sequence>
<organism>
    <name type="scientific">Conus victoriae</name>
    <name type="common">Queen Victoria cone</name>
    <dbReference type="NCBI Taxonomy" id="319920"/>
    <lineage>
        <taxon>Eukaryota</taxon>
        <taxon>Metazoa</taxon>
        <taxon>Spiralia</taxon>
        <taxon>Lophotrochozoa</taxon>
        <taxon>Mollusca</taxon>
        <taxon>Gastropoda</taxon>
        <taxon>Caenogastropoda</taxon>
        <taxon>Neogastropoda</taxon>
        <taxon>Conoidea</taxon>
        <taxon>Conidae</taxon>
        <taxon>Conus</taxon>
        <taxon>Cylinder</taxon>
    </lineage>
</organism>
<accession>G1AS74</accession>
<name>O268_CONVC</name>
<dbReference type="EMBL" id="JF433901">
    <property type="protein sequence ID" value="AEA35357.1"/>
    <property type="molecule type" value="mRNA"/>
</dbReference>
<dbReference type="ConoServer" id="4269">
    <property type="toxin name" value="Vc6.8 precursor"/>
</dbReference>
<dbReference type="GO" id="GO:0005576">
    <property type="term" value="C:extracellular region"/>
    <property type="evidence" value="ECO:0007669"/>
    <property type="project" value="UniProtKB-SubCell"/>
</dbReference>
<dbReference type="GO" id="GO:0008200">
    <property type="term" value="F:ion channel inhibitor activity"/>
    <property type="evidence" value="ECO:0007669"/>
    <property type="project" value="InterPro"/>
</dbReference>
<dbReference type="GO" id="GO:0090729">
    <property type="term" value="F:toxin activity"/>
    <property type="evidence" value="ECO:0007669"/>
    <property type="project" value="UniProtKB-KW"/>
</dbReference>
<dbReference type="InterPro" id="IPR004214">
    <property type="entry name" value="Conotoxin"/>
</dbReference>
<dbReference type="Pfam" id="PF02950">
    <property type="entry name" value="Conotoxin"/>
    <property type="match status" value="1"/>
</dbReference>